<sequence>MRIMGLDVGTKTIGVALSDPLGWTAQGLTTIRRRNLAADLAALKELVRRYGVEELVVGLPRNMNGSLGPQAEAVRAFARHLQAEVGLPVHFFDERLTTVAAGRVLLEADLSRRRRRQVIDQVAATYILQGYLDRLGQNGV</sequence>
<feature type="chain" id="PRO_0000257549" description="Putative pre-16S rRNA nuclease">
    <location>
        <begin position="1"/>
        <end position="140"/>
    </location>
</feature>
<organism>
    <name type="scientific">Moorella thermoacetica (strain ATCC 39073 / JCM 9320)</name>
    <dbReference type="NCBI Taxonomy" id="264732"/>
    <lineage>
        <taxon>Bacteria</taxon>
        <taxon>Bacillati</taxon>
        <taxon>Bacillota</taxon>
        <taxon>Clostridia</taxon>
        <taxon>Moorellales</taxon>
        <taxon>Moorellaceae</taxon>
        <taxon>Moorella</taxon>
    </lineage>
</organism>
<gene>
    <name type="ordered locus">Moth_1640</name>
</gene>
<accession>Q2RHZ7</accession>
<protein>
    <recommendedName>
        <fullName evidence="1">Putative pre-16S rRNA nuclease</fullName>
        <ecNumber evidence="1">3.1.-.-</ecNumber>
    </recommendedName>
</protein>
<evidence type="ECO:0000255" key="1">
    <source>
        <dbReference type="HAMAP-Rule" id="MF_00651"/>
    </source>
</evidence>
<reference key="1">
    <citation type="journal article" date="2008" name="Environ. Microbiol.">
        <title>The complete genome sequence of Moorella thermoacetica (f. Clostridium thermoaceticum).</title>
        <authorList>
            <person name="Pierce E."/>
            <person name="Xie G."/>
            <person name="Barabote R.D."/>
            <person name="Saunders E."/>
            <person name="Han C.S."/>
            <person name="Detter J.C."/>
            <person name="Richardson P."/>
            <person name="Brettin T.S."/>
            <person name="Das A."/>
            <person name="Ljungdahl L.G."/>
            <person name="Ragsdale S.W."/>
        </authorList>
    </citation>
    <scope>NUCLEOTIDE SEQUENCE [LARGE SCALE GENOMIC DNA]</scope>
    <source>
        <strain>ATCC 39073 / JCM 9320</strain>
    </source>
</reference>
<comment type="function">
    <text evidence="1">Could be a nuclease involved in processing of the 5'-end of pre-16S rRNA.</text>
</comment>
<comment type="subcellular location">
    <subcellularLocation>
        <location evidence="1">Cytoplasm</location>
    </subcellularLocation>
</comment>
<comment type="similarity">
    <text evidence="1">Belongs to the YqgF nuclease family.</text>
</comment>
<proteinExistence type="inferred from homology"/>
<keyword id="KW-0963">Cytoplasm</keyword>
<keyword id="KW-0378">Hydrolase</keyword>
<keyword id="KW-0540">Nuclease</keyword>
<keyword id="KW-0690">Ribosome biogenesis</keyword>
<dbReference type="EC" id="3.1.-.-" evidence="1"/>
<dbReference type="EMBL" id="CP000232">
    <property type="protein sequence ID" value="ABC19942.1"/>
    <property type="molecule type" value="Genomic_DNA"/>
</dbReference>
<dbReference type="RefSeq" id="YP_430485.1">
    <property type="nucleotide sequence ID" value="NC_007644.1"/>
</dbReference>
<dbReference type="SMR" id="Q2RHZ7"/>
<dbReference type="STRING" id="264732.Moth_1640"/>
<dbReference type="EnsemblBacteria" id="ABC19942">
    <property type="protein sequence ID" value="ABC19942"/>
    <property type="gene ID" value="Moth_1640"/>
</dbReference>
<dbReference type="KEGG" id="mta:Moth_1640"/>
<dbReference type="PATRIC" id="fig|264732.11.peg.1778"/>
<dbReference type="eggNOG" id="COG0816">
    <property type="taxonomic scope" value="Bacteria"/>
</dbReference>
<dbReference type="HOGENOM" id="CLU_098240_2_0_9"/>
<dbReference type="OrthoDB" id="9796140at2"/>
<dbReference type="GO" id="GO:0005829">
    <property type="term" value="C:cytosol"/>
    <property type="evidence" value="ECO:0007669"/>
    <property type="project" value="TreeGrafter"/>
</dbReference>
<dbReference type="GO" id="GO:0004518">
    <property type="term" value="F:nuclease activity"/>
    <property type="evidence" value="ECO:0007669"/>
    <property type="project" value="UniProtKB-KW"/>
</dbReference>
<dbReference type="GO" id="GO:0000967">
    <property type="term" value="P:rRNA 5'-end processing"/>
    <property type="evidence" value="ECO:0007669"/>
    <property type="project" value="UniProtKB-UniRule"/>
</dbReference>
<dbReference type="CDD" id="cd16964">
    <property type="entry name" value="YqgF"/>
    <property type="match status" value="1"/>
</dbReference>
<dbReference type="Gene3D" id="3.30.420.140">
    <property type="entry name" value="YqgF/RNase H-like domain"/>
    <property type="match status" value="1"/>
</dbReference>
<dbReference type="HAMAP" id="MF_00651">
    <property type="entry name" value="Nuclease_YqgF"/>
    <property type="match status" value="1"/>
</dbReference>
<dbReference type="InterPro" id="IPR012337">
    <property type="entry name" value="RNaseH-like_sf"/>
</dbReference>
<dbReference type="InterPro" id="IPR005227">
    <property type="entry name" value="YqgF"/>
</dbReference>
<dbReference type="InterPro" id="IPR006641">
    <property type="entry name" value="YqgF/RNaseH-like_dom"/>
</dbReference>
<dbReference type="InterPro" id="IPR037027">
    <property type="entry name" value="YqgF/RNaseH-like_dom_sf"/>
</dbReference>
<dbReference type="NCBIfam" id="TIGR00250">
    <property type="entry name" value="RNAse_H_YqgF"/>
    <property type="match status" value="1"/>
</dbReference>
<dbReference type="PANTHER" id="PTHR33317">
    <property type="entry name" value="POLYNUCLEOTIDYL TRANSFERASE, RIBONUCLEASE H-LIKE SUPERFAMILY PROTEIN"/>
    <property type="match status" value="1"/>
</dbReference>
<dbReference type="PANTHER" id="PTHR33317:SF4">
    <property type="entry name" value="POLYNUCLEOTIDYL TRANSFERASE, RIBONUCLEASE H-LIKE SUPERFAMILY PROTEIN"/>
    <property type="match status" value="1"/>
</dbReference>
<dbReference type="Pfam" id="PF03652">
    <property type="entry name" value="RuvX"/>
    <property type="match status" value="1"/>
</dbReference>
<dbReference type="SMART" id="SM00732">
    <property type="entry name" value="YqgFc"/>
    <property type="match status" value="1"/>
</dbReference>
<dbReference type="SUPFAM" id="SSF53098">
    <property type="entry name" value="Ribonuclease H-like"/>
    <property type="match status" value="1"/>
</dbReference>
<name>YQGF_MOOTA</name>